<protein>
    <recommendedName>
        <fullName evidence="5">Hydrolase phiM</fullName>
        <ecNumber evidence="3">3.1.2.-</ecNumber>
    </recommendedName>
    <alternativeName>
        <fullName evidence="5">Phomoidride biosynthesis cluster protein M</fullName>
    </alternativeName>
</protein>
<name>TSTM_TALSN</name>
<feature type="chain" id="PRO_0000458957" description="Hydrolase phiM">
    <location>
        <begin position="1"/>
        <end position="252"/>
    </location>
</feature>
<feature type="active site" description="Charge relay system" evidence="1">
    <location>
        <position position="126"/>
    </location>
</feature>
<comment type="function">
    <text evidence="2 3">Hydrolase; part of the gene cluster that mediates the biosynthesis of the antihypercholesterolemic agents phomoidrides which are dimeric anhydrides (PubMed:26558485, PubMed:36374185). Within the pathway, phiM releases the C12-fatty acyl chain from phiA (PubMed:36374185). The pathway begins with the highly reducing polyketide synthase tstA that catalyzes the formation of a C12-fatty acyl-ACP, starting from one acetate and 5 malonate units. The hydrolase tstM is involved in the release of the C12-fatty acyl chain from phiA. The alkylcitrate synthase (ACS) tstJ and the alkylcitrate dehydratase (ACDH) tstI then give rise to decarboxylated monomeric anhydrides by coupling the C12-fatty acyl chain with oxalacetic acid. The cyclase tstC is responsible for the dimerization of the monomeric anhydrides which leads to the production of prephomoidride that contains the characteristic bicyclo[4.3.1]deca-1,6-diene system of phomoidrides. Iterative oxidation catalyzed by the alpha-ketoglutarate-dependent dioxygenase tstK produced then phomoidride A. Finally, the methyltransferase tstE converts phomoidride A to phomoidride B via an acetalization reaction. The phosphatidylethanolamine-binding protein tstB and tstN are not essential for dimerization and their functions have still to be determined (PubMed:36374185).</text>
</comment>
<comment type="pathway">
    <text evidence="3">Secondary metabolite biosynthesis.</text>
</comment>
<comment type="biotechnology">
    <text evidence="4">Phomoidrides A and B (also known as CP-225,917 and CP-263,114) are potent inhibitors of Ras farnesyltransferase and squalene synthase (PubMed:9066758). CP-225,917 and CP-263,114 inhibit Ras farnesyl transferase from rat brain with IC(50) values of 6 uM and 20 uoM, respectively (PubMed:9066758). CP-225,917 inhibits squalene synthase with an IC(50) value of 43 uM and CP-263,114 with an IC(50) of 160 uM (PubMed:9066758).</text>
</comment>
<comment type="similarity">
    <text evidence="6">Belongs to the LovG family.</text>
</comment>
<reference key="1">
    <citation type="journal article" date="2015" name="Genome Announc.">
        <title>Genome sequence of the AIDS-associated pathogen Penicillium marneffei (ATCC18224) and its near taxonomic relative Talaromyces stipitatus (ATCC10500).</title>
        <authorList>
            <person name="Nierman W.C."/>
            <person name="Fedorova-Abrams N.D."/>
            <person name="Andrianopoulos A."/>
        </authorList>
    </citation>
    <scope>NUCLEOTIDE SEQUENCE [LARGE SCALE GENOMIC DNA]</scope>
    <source>
        <strain>ATCC 10500 / CBS 375.48 / QM 6759 / NRRL 1006</strain>
    </source>
</reference>
<reference key="2">
    <citation type="journal article" date="1997" name="J. Antibiot.">
        <title>CP-225,917 and CP-263,114, novel Ras farnesylation inhibitors from an unidentified fungus. I. Taxonomy, fermentation, isolation, and biochemical properties.</title>
        <authorList>
            <person name="Dabrah T.T."/>
            <person name="Harwood H.J. Jr."/>
            <person name="Huang L.H."/>
            <person name="Jankovich N.D."/>
            <person name="Kaneko T."/>
            <person name="Li J.C."/>
            <person name="Lindsey S."/>
            <person name="Moshier P.M."/>
            <person name="Subashi T.A."/>
            <person name="Therrien M."/>
            <person name="Watts P.C."/>
        </authorList>
    </citation>
    <scope>BIOTECHNOLOGY</scope>
</reference>
<reference key="3">
    <citation type="journal article" date="2015" name="Org. Lett.">
        <title>Biosynthetic study on antihypercholesterolemic agent phomoidride: general biogenesis of fungal dimeric anhydrides.</title>
        <authorList>
            <person name="Fujii R."/>
            <person name="Matsu Y."/>
            <person name="Minami A."/>
            <person name="Nagamine S."/>
            <person name="Takeuchi I."/>
            <person name="Gomi K."/>
            <person name="Oikawa H."/>
        </authorList>
    </citation>
    <scope>IDENTIFICATION</scope>
    <scope>FUNCTION</scope>
</reference>
<reference key="4">
    <citation type="journal article" date="2022" name="J. Am. Chem. Soc.">
        <title>Elucidation of late-stage biosynthesis of phomoidride: proposal of cyclization mechanism affording characteristic nine-membered ring of fungal dimeric anhydride.</title>
        <authorList>
            <person name="Yamamoto S."/>
            <person name="Matsuyama T."/>
            <person name="Ozaki T."/>
            <person name="Takino J."/>
            <person name="Sato H."/>
            <person name="Uchiyama M."/>
            <person name="Minami A."/>
            <person name="Oikawa H."/>
        </authorList>
    </citation>
    <scope>FUNCTION</scope>
    <scope>CATALYTIC ACTIVITY</scope>
    <scope>PATHWAY</scope>
</reference>
<organism>
    <name type="scientific">Talaromyces stipitatus (strain ATCC 10500 / CBS 375.48 / QM 6759 / NRRL 1006)</name>
    <name type="common">Penicillium stipitatum</name>
    <dbReference type="NCBI Taxonomy" id="441959"/>
    <lineage>
        <taxon>Eukaryota</taxon>
        <taxon>Fungi</taxon>
        <taxon>Dikarya</taxon>
        <taxon>Ascomycota</taxon>
        <taxon>Pezizomycotina</taxon>
        <taxon>Eurotiomycetes</taxon>
        <taxon>Eurotiomycetidae</taxon>
        <taxon>Eurotiales</taxon>
        <taxon>Trichocomaceae</taxon>
        <taxon>Talaromyces</taxon>
        <taxon>Talaromyces sect. Talaromyces</taxon>
    </lineage>
</organism>
<gene>
    <name evidence="5" type="primary">tstM</name>
    <name type="ORF">TSTA_048520</name>
</gene>
<proteinExistence type="evidence at protein level"/>
<dbReference type="EC" id="3.1.2.-" evidence="3"/>
<dbReference type="EMBL" id="EQ962657">
    <property type="protein sequence ID" value="EED15412.1"/>
    <property type="molecule type" value="Genomic_DNA"/>
</dbReference>
<dbReference type="RefSeq" id="XP_002485365.1">
    <property type="nucleotide sequence ID" value="XM_002485320.1"/>
</dbReference>
<dbReference type="SMR" id="B8MKZ6"/>
<dbReference type="GeneID" id="8107034"/>
<dbReference type="VEuPathDB" id="FungiDB:TSTA_048520"/>
<dbReference type="eggNOG" id="KOG2551">
    <property type="taxonomic scope" value="Eukaryota"/>
</dbReference>
<dbReference type="HOGENOM" id="CLU_051938_4_2_1"/>
<dbReference type="InParanoid" id="B8MKZ6"/>
<dbReference type="OMA" id="IPEWETE"/>
<dbReference type="OrthoDB" id="414698at2759"/>
<dbReference type="PhylomeDB" id="B8MKZ6"/>
<dbReference type="Proteomes" id="UP000001745">
    <property type="component" value="Unassembled WGS sequence"/>
</dbReference>
<dbReference type="GO" id="GO:0005737">
    <property type="term" value="C:cytoplasm"/>
    <property type="evidence" value="ECO:0007669"/>
    <property type="project" value="TreeGrafter"/>
</dbReference>
<dbReference type="GO" id="GO:0005634">
    <property type="term" value="C:nucleus"/>
    <property type="evidence" value="ECO:0007669"/>
    <property type="project" value="TreeGrafter"/>
</dbReference>
<dbReference type="GO" id="GO:0016787">
    <property type="term" value="F:hydrolase activity"/>
    <property type="evidence" value="ECO:0007669"/>
    <property type="project" value="UniProtKB-KW"/>
</dbReference>
<dbReference type="GO" id="GO:0019748">
    <property type="term" value="P:secondary metabolic process"/>
    <property type="evidence" value="ECO:0007669"/>
    <property type="project" value="TreeGrafter"/>
</dbReference>
<dbReference type="Gene3D" id="3.40.50.1820">
    <property type="entry name" value="alpha/beta hydrolase"/>
    <property type="match status" value="1"/>
</dbReference>
<dbReference type="InterPro" id="IPR029058">
    <property type="entry name" value="AB_hydrolase_fold"/>
</dbReference>
<dbReference type="InterPro" id="IPR005645">
    <property type="entry name" value="FSH-like_dom"/>
</dbReference>
<dbReference type="InterPro" id="IPR050593">
    <property type="entry name" value="LovG"/>
</dbReference>
<dbReference type="PANTHER" id="PTHR48070:SF4">
    <property type="entry name" value="ESTERASE ALNB"/>
    <property type="match status" value="1"/>
</dbReference>
<dbReference type="PANTHER" id="PTHR48070">
    <property type="entry name" value="ESTERASE OVCA2"/>
    <property type="match status" value="1"/>
</dbReference>
<dbReference type="Pfam" id="PF03959">
    <property type="entry name" value="FSH1"/>
    <property type="match status" value="1"/>
</dbReference>
<dbReference type="SUPFAM" id="SSF53474">
    <property type="entry name" value="alpha/beta-Hydrolases"/>
    <property type="match status" value="1"/>
</dbReference>
<sequence>MSRAHPKQPVTGRNIPILAITMPALKLLCLHGAGMNSEIMKSHLSSLAKTLEYRNIAQFAYAEGSVETEPGPGITPGLYEGPYYSFHIWPPKAGNLQDEESIQNAYEELLEIIDDEGPFDGLLGFSHGGSFLAELLARYARDNPATDVERLARCAVFINSFPPFRNDPDQNPIIDYELLKHFPKIPTLHVVGTSDFVHEYSTILYEKLHQKAPTSTGLVTHSKGHEIPRDPKVLDKVVAGFEKLNFAVSFSH</sequence>
<accession>B8MKZ6</accession>
<evidence type="ECO:0000250" key="1">
    <source>
        <dbReference type="UniProtKB" id="P38777"/>
    </source>
</evidence>
<evidence type="ECO:0000269" key="2">
    <source>
    </source>
</evidence>
<evidence type="ECO:0000269" key="3">
    <source>
    </source>
</evidence>
<evidence type="ECO:0000269" key="4">
    <source>
    </source>
</evidence>
<evidence type="ECO:0000303" key="5">
    <source>
    </source>
</evidence>
<evidence type="ECO:0000305" key="6"/>
<keyword id="KW-0378">Hydrolase</keyword>
<keyword id="KW-1185">Reference proteome</keyword>